<keyword id="KW-0128">Catecholamine metabolism</keyword>
<keyword id="KW-0963">Cytoplasm</keyword>
<keyword id="KW-0443">Lipid metabolism</keyword>
<keyword id="KW-1185">Reference proteome</keyword>
<keyword id="KW-0753">Steroid metabolism</keyword>
<keyword id="KW-0808">Transferase</keyword>
<evidence type="ECO:0000250" key="1"/>
<evidence type="ECO:0000269" key="2">
    <source>
    </source>
</evidence>
<evidence type="ECO:0000305" key="3"/>
<evidence type="ECO:0000312" key="4">
    <source>
        <dbReference type="EMBL" id="AAP55637.1"/>
    </source>
</evidence>
<evidence type="ECO:0000312" key="5">
    <source>
        <dbReference type="ZFIN" id="ZDB-GENE-030804-28"/>
    </source>
</evidence>
<comment type="function">
    <text evidence="2">Sulfotransferase that utilizes 3'-phospho-5'-adenylyl sulfate (PAPS) as sulfonate donor to catalyze the sulfate conjugation of a variety of xenobiotic and endogenous compounds, including dopamine, T3 (triiodo-L-thyronine), T4 (thyroxine), estrone, DHEA (dehydroepiandrosterone), flavonoids, isoflavonoids and other phenolic compounds.</text>
</comment>
<comment type="activity regulation">
    <text evidence="2">Inhibited by Hg(2+), Co(2+), Zn(2+), Cd(2+), Cu(2+) and Pb(2+) ions. Activated slightly by Mn(2+), Ca(2+) and Mg(2+) ions.</text>
</comment>
<comment type="biophysicochemical properties">
    <phDependence>
        <text>Optimum pH is about 5.0 with n-propyl gallate as substrate, and another smaller pH optimum is observed spanning pH 9.5-10.5. Optimum pH is 10.5 with dopamine as substrate.</text>
    </phDependence>
    <temperatureDependence>
        <text>Active from 20 to 43 degrees Celsius.</text>
    </temperatureDependence>
</comment>
<comment type="subcellular location">
    <subcellularLocation>
        <location>Cytoplasm</location>
    </subcellularLocation>
</comment>
<comment type="similarity">
    <text evidence="3">Belongs to the sulfotransferase 1 family.</text>
</comment>
<proteinExistence type="evidence at protein level"/>
<organism>
    <name type="scientific">Danio rerio</name>
    <name type="common">Zebrafish</name>
    <name type="synonym">Brachydanio rerio</name>
    <dbReference type="NCBI Taxonomy" id="7955"/>
    <lineage>
        <taxon>Eukaryota</taxon>
        <taxon>Metazoa</taxon>
        <taxon>Chordata</taxon>
        <taxon>Craniata</taxon>
        <taxon>Vertebrata</taxon>
        <taxon>Euteleostomi</taxon>
        <taxon>Actinopterygii</taxon>
        <taxon>Neopterygii</taxon>
        <taxon>Teleostei</taxon>
        <taxon>Ostariophysi</taxon>
        <taxon>Cypriniformes</taxon>
        <taxon>Danionidae</taxon>
        <taxon>Danioninae</taxon>
        <taxon>Danio</taxon>
    </lineage>
</organism>
<reference evidence="3 4" key="1">
    <citation type="journal article" date="2003" name="Arch. Biochem. Biophys.">
        <title>cDNA cloning, expression, and functional characterization of a zebrafish SULT1 cytosolic sulfotransferase.</title>
        <authorList>
            <person name="Sugahara T."/>
            <person name="Liu C.-C."/>
            <person name="Carter G."/>
            <person name="Pai T.G."/>
            <person name="Liu M.-C."/>
        </authorList>
    </citation>
    <scope>NUCLEOTIDE SEQUENCE [MRNA]</scope>
    <scope>FUNCTION</scope>
    <scope>TISSUE SPECIFICITY</scope>
    <scope>ACTIVITY REGULATION</scope>
</reference>
<accession>Q7T2V2</accession>
<feature type="chain" id="PRO_0000085175" description="Cytosolic sulfotransferase 3">
    <location>
        <begin position="1"/>
        <end position="301"/>
    </location>
</feature>
<feature type="active site" description="Proton acceptor" evidence="1">
    <location>
        <position position="115"/>
    </location>
</feature>
<feature type="binding site" evidence="1">
    <location>
        <begin position="53"/>
        <end position="58"/>
    </location>
    <ligand>
        <name>3'-phosphoadenylyl sulfate</name>
        <dbReference type="ChEBI" id="CHEBI:58339"/>
    </ligand>
</feature>
<feature type="binding site" evidence="1">
    <location>
        <position position="137"/>
    </location>
    <ligand>
        <name>3'-phosphoadenylyl sulfate</name>
        <dbReference type="ChEBI" id="CHEBI:58339"/>
    </ligand>
</feature>
<feature type="binding site" evidence="1">
    <location>
        <position position="145"/>
    </location>
    <ligand>
        <name>3'-phosphoadenylyl sulfate</name>
        <dbReference type="ChEBI" id="CHEBI:58339"/>
    </ligand>
</feature>
<feature type="binding site" evidence="1">
    <location>
        <position position="201"/>
    </location>
    <ligand>
        <name>3'-phosphoadenylyl sulfate</name>
        <dbReference type="ChEBI" id="CHEBI:58339"/>
    </ligand>
</feature>
<feature type="binding site" evidence="1">
    <location>
        <begin position="235"/>
        <end position="240"/>
    </location>
    <ligand>
        <name>3'-phosphoadenylyl sulfate</name>
        <dbReference type="ChEBI" id="CHEBI:58339"/>
    </ligand>
</feature>
<feature type="binding site" evidence="1">
    <location>
        <begin position="263"/>
        <end position="265"/>
    </location>
    <ligand>
        <name>3'-phosphoadenylyl sulfate</name>
        <dbReference type="ChEBI" id="CHEBI:58339"/>
    </ligand>
</feature>
<name>ST1S3_DANRE</name>
<gene>
    <name evidence="5" type="primary">sult1st3</name>
</gene>
<protein>
    <recommendedName>
        <fullName>Cytosolic sulfotransferase 3</fullName>
        <ecNumber>2.8.2.-</ecNumber>
    </recommendedName>
    <alternativeName>
        <fullName>SULT1 ST3</fullName>
    </alternativeName>
</protein>
<sequence length="301" mass="35377">MEISDFSSMKLNSRPELIDFEGISMIHYFTDNWEKVKNFQARPDDILIATYPKAGTTWVSYILDLLYFGNESPERQTSQPIYMRVPFLEACFEGIPFGTELADNLPTSPRLIKTHLPVQLVPKSFWEQNSKVVYVARNAKDNAVSYFHFDRMNMGQPEPGDWNTFLQKFMEGRNVFGPWYDHVNGYWKKKQTYSNILYMFYEDMVENTGREVERLCSFLGLSTSAAERERITKGVQFDAMKQNKMTNYSTIPVMDFKISPFMRKGKVGDWRNHFTVAQNEQFDEVYKQKMKNTTVKFRTEL</sequence>
<dbReference type="EC" id="2.8.2.-"/>
<dbReference type="EMBL" id="AY196985">
    <property type="protein sequence ID" value="AAP55637.1"/>
    <property type="molecule type" value="mRNA"/>
</dbReference>
<dbReference type="SMR" id="Q7T2V2"/>
<dbReference type="FunCoup" id="Q7T2V2">
    <property type="interactions" value="28"/>
</dbReference>
<dbReference type="STRING" id="7955.ENSDARP00000006665"/>
<dbReference type="PaxDb" id="7955-ENSDARP00000006665"/>
<dbReference type="AGR" id="ZFIN:ZDB-GENE-030804-28"/>
<dbReference type="ZFIN" id="ZDB-GENE-030804-28">
    <property type="gene designation" value="sult1st3"/>
</dbReference>
<dbReference type="eggNOG" id="KOG1584">
    <property type="taxonomic scope" value="Eukaryota"/>
</dbReference>
<dbReference type="InParanoid" id="Q7T2V2"/>
<dbReference type="PhylomeDB" id="Q7T2V2"/>
<dbReference type="Reactome" id="R-DRE-156584">
    <property type="pathway name" value="Cytosolic sulfonation of small molecules"/>
</dbReference>
<dbReference type="Reactome" id="R-DRE-9753281">
    <property type="pathway name" value="Paracetamol ADME"/>
</dbReference>
<dbReference type="PRO" id="PR:Q7T2V2"/>
<dbReference type="Proteomes" id="UP000000437">
    <property type="component" value="Unplaced"/>
</dbReference>
<dbReference type="GO" id="GO:0005737">
    <property type="term" value="C:cytoplasm"/>
    <property type="evidence" value="ECO:0000318"/>
    <property type="project" value="GO_Central"/>
</dbReference>
<dbReference type="GO" id="GO:0004062">
    <property type="term" value="F:aryl sulfotransferase activity"/>
    <property type="evidence" value="ECO:0000318"/>
    <property type="project" value="GO_Central"/>
</dbReference>
<dbReference type="GO" id="GO:0008146">
    <property type="term" value="F:sulfotransferase activity"/>
    <property type="evidence" value="ECO:0000314"/>
    <property type="project" value="UniProtKB"/>
</dbReference>
<dbReference type="GO" id="GO:0006584">
    <property type="term" value="P:catecholamine metabolic process"/>
    <property type="evidence" value="ECO:0007669"/>
    <property type="project" value="UniProtKB-KW"/>
</dbReference>
<dbReference type="GO" id="GO:0008202">
    <property type="term" value="P:steroid metabolic process"/>
    <property type="evidence" value="ECO:0007669"/>
    <property type="project" value="UniProtKB-KW"/>
</dbReference>
<dbReference type="GO" id="GO:0051923">
    <property type="term" value="P:sulfation"/>
    <property type="evidence" value="ECO:0000318"/>
    <property type="project" value="GO_Central"/>
</dbReference>
<dbReference type="GO" id="GO:0006805">
    <property type="term" value="P:xenobiotic metabolic process"/>
    <property type="evidence" value="ECO:0000314"/>
    <property type="project" value="UniProtKB"/>
</dbReference>
<dbReference type="FunFam" id="3.40.50.300:FF:000433">
    <property type="entry name" value="Estrogen sulfotransferase"/>
    <property type="match status" value="1"/>
</dbReference>
<dbReference type="Gene3D" id="3.40.50.300">
    <property type="entry name" value="P-loop containing nucleotide triphosphate hydrolases"/>
    <property type="match status" value="1"/>
</dbReference>
<dbReference type="InterPro" id="IPR027417">
    <property type="entry name" value="P-loop_NTPase"/>
</dbReference>
<dbReference type="InterPro" id="IPR000863">
    <property type="entry name" value="Sulfotransferase_dom"/>
</dbReference>
<dbReference type="PANTHER" id="PTHR11783">
    <property type="entry name" value="SULFOTRANSFERASE SULT"/>
    <property type="match status" value="1"/>
</dbReference>
<dbReference type="Pfam" id="PF00685">
    <property type="entry name" value="Sulfotransfer_1"/>
    <property type="match status" value="1"/>
</dbReference>
<dbReference type="SUPFAM" id="SSF52540">
    <property type="entry name" value="P-loop containing nucleoside triphosphate hydrolases"/>
    <property type="match status" value="1"/>
</dbReference>